<gene>
    <name evidence="1" type="primary">cyaY</name>
    <name type="ordered locus">YPK_4013</name>
</gene>
<evidence type="ECO:0000255" key="1">
    <source>
        <dbReference type="HAMAP-Rule" id="MF_00142"/>
    </source>
</evidence>
<reference key="1">
    <citation type="submission" date="2008-02" db="EMBL/GenBank/DDBJ databases">
        <title>Complete sequence of Yersinia pseudotuberculosis YPIII.</title>
        <authorList>
            <consortium name="US DOE Joint Genome Institute"/>
            <person name="Copeland A."/>
            <person name="Lucas S."/>
            <person name="Lapidus A."/>
            <person name="Glavina del Rio T."/>
            <person name="Dalin E."/>
            <person name="Tice H."/>
            <person name="Bruce D."/>
            <person name="Goodwin L."/>
            <person name="Pitluck S."/>
            <person name="Munk A.C."/>
            <person name="Brettin T."/>
            <person name="Detter J.C."/>
            <person name="Han C."/>
            <person name="Tapia R."/>
            <person name="Schmutz J."/>
            <person name="Larimer F."/>
            <person name="Land M."/>
            <person name="Hauser L."/>
            <person name="Challacombe J.F."/>
            <person name="Green L."/>
            <person name="Lindler L.E."/>
            <person name="Nikolich M.P."/>
            <person name="Richardson P."/>
        </authorList>
    </citation>
    <scope>NUCLEOTIDE SEQUENCE [LARGE SCALE GENOMIC DNA]</scope>
    <source>
        <strain>YPIII</strain>
    </source>
</reference>
<protein>
    <recommendedName>
        <fullName evidence="1">Iron-sulfur cluster assembly protein CyaY</fullName>
    </recommendedName>
</protein>
<name>CYAY_YERPY</name>
<organism>
    <name type="scientific">Yersinia pseudotuberculosis serotype O:3 (strain YPIII)</name>
    <dbReference type="NCBI Taxonomy" id="502800"/>
    <lineage>
        <taxon>Bacteria</taxon>
        <taxon>Pseudomonadati</taxon>
        <taxon>Pseudomonadota</taxon>
        <taxon>Gammaproteobacteria</taxon>
        <taxon>Enterobacterales</taxon>
        <taxon>Yersiniaceae</taxon>
        <taxon>Yersinia</taxon>
    </lineage>
</organism>
<sequence length="106" mass="11874">MNDSEFHQLADQLMLYIEETLDGFTGDSDIDYETNGGVMTLTFENGSKIVINRQEPLHQVWLATKAGGYHFNYRDGHWYCSRSGEEFLAKLSEAASAQAGENVSFG</sequence>
<keyword id="KW-0408">Iron</keyword>
<keyword id="KW-0479">Metal-binding</keyword>
<comment type="function">
    <text evidence="1">Involved in iron-sulfur (Fe-S) cluster assembly. May act as a regulator of Fe-S biogenesis.</text>
</comment>
<comment type="similarity">
    <text evidence="1">Belongs to the frataxin family.</text>
</comment>
<dbReference type="EMBL" id="CP000950">
    <property type="protein sequence ID" value="ACA70276.1"/>
    <property type="molecule type" value="Genomic_DNA"/>
</dbReference>
<dbReference type="RefSeq" id="WP_012304732.1">
    <property type="nucleotide sequence ID" value="NZ_CP009792.1"/>
</dbReference>
<dbReference type="SMR" id="B1JPE3"/>
<dbReference type="KEGG" id="ypy:YPK_4013"/>
<dbReference type="PATRIC" id="fig|502800.11.peg.362"/>
<dbReference type="GO" id="GO:0005829">
    <property type="term" value="C:cytosol"/>
    <property type="evidence" value="ECO:0007669"/>
    <property type="project" value="TreeGrafter"/>
</dbReference>
<dbReference type="GO" id="GO:0008199">
    <property type="term" value="F:ferric iron binding"/>
    <property type="evidence" value="ECO:0007669"/>
    <property type="project" value="InterPro"/>
</dbReference>
<dbReference type="GO" id="GO:0008198">
    <property type="term" value="F:ferrous iron binding"/>
    <property type="evidence" value="ECO:0007669"/>
    <property type="project" value="TreeGrafter"/>
</dbReference>
<dbReference type="GO" id="GO:0016226">
    <property type="term" value="P:iron-sulfur cluster assembly"/>
    <property type="evidence" value="ECO:0007669"/>
    <property type="project" value="UniProtKB-UniRule"/>
</dbReference>
<dbReference type="CDD" id="cd00503">
    <property type="entry name" value="Frataxin"/>
    <property type="match status" value="1"/>
</dbReference>
<dbReference type="FunFam" id="3.30.920.10:FF:000001">
    <property type="entry name" value="Iron-sulfur cluster assembly protein CyaY"/>
    <property type="match status" value="1"/>
</dbReference>
<dbReference type="Gene3D" id="3.30.920.10">
    <property type="entry name" value="Frataxin/CyaY"/>
    <property type="match status" value="1"/>
</dbReference>
<dbReference type="HAMAP" id="MF_00142">
    <property type="entry name" value="CyaY"/>
    <property type="match status" value="1"/>
</dbReference>
<dbReference type="InterPro" id="IPR047584">
    <property type="entry name" value="CyaY"/>
</dbReference>
<dbReference type="InterPro" id="IPR002908">
    <property type="entry name" value="Frataxin/CyaY"/>
</dbReference>
<dbReference type="InterPro" id="IPR036524">
    <property type="entry name" value="Frataxin/CyaY_sf"/>
</dbReference>
<dbReference type="InterPro" id="IPR020895">
    <property type="entry name" value="Frataxin_CS"/>
</dbReference>
<dbReference type="NCBIfam" id="TIGR03421">
    <property type="entry name" value="FeS_CyaY"/>
    <property type="match status" value="1"/>
</dbReference>
<dbReference type="PANTHER" id="PTHR16821">
    <property type="entry name" value="FRATAXIN"/>
    <property type="match status" value="1"/>
</dbReference>
<dbReference type="PANTHER" id="PTHR16821:SF2">
    <property type="entry name" value="FRATAXIN, MITOCHONDRIAL"/>
    <property type="match status" value="1"/>
</dbReference>
<dbReference type="Pfam" id="PF01491">
    <property type="entry name" value="Frataxin_Cyay"/>
    <property type="match status" value="1"/>
</dbReference>
<dbReference type="SMART" id="SM01219">
    <property type="entry name" value="Frataxin_Cyay"/>
    <property type="match status" value="1"/>
</dbReference>
<dbReference type="SUPFAM" id="SSF55387">
    <property type="entry name" value="Frataxin/Nqo15-like"/>
    <property type="match status" value="1"/>
</dbReference>
<dbReference type="PROSITE" id="PS01344">
    <property type="entry name" value="FRATAXIN_1"/>
    <property type="match status" value="1"/>
</dbReference>
<dbReference type="PROSITE" id="PS50810">
    <property type="entry name" value="FRATAXIN_2"/>
    <property type="match status" value="1"/>
</dbReference>
<proteinExistence type="inferred from homology"/>
<feature type="chain" id="PRO_1000096263" description="Iron-sulfur cluster assembly protein CyaY">
    <location>
        <begin position="1"/>
        <end position="106"/>
    </location>
</feature>
<accession>B1JPE3</accession>